<protein>
    <recommendedName>
        <fullName evidence="1">Translation initiation factor IF-1</fullName>
    </recommendedName>
</protein>
<accession>Q1D753</accession>
<keyword id="KW-0963">Cytoplasm</keyword>
<keyword id="KW-0396">Initiation factor</keyword>
<keyword id="KW-0648">Protein biosynthesis</keyword>
<keyword id="KW-1185">Reference proteome</keyword>
<keyword id="KW-0694">RNA-binding</keyword>
<keyword id="KW-0699">rRNA-binding</keyword>
<comment type="function">
    <text evidence="1">One of the essential components for the initiation of protein synthesis. Stabilizes the binding of IF-2 and IF-3 on the 30S subunit to which N-formylmethionyl-tRNA(fMet) subsequently binds. Helps modulate mRNA selection, yielding the 30S pre-initiation complex (PIC). Upon addition of the 50S ribosomal subunit IF-1, IF-2 and IF-3 are released leaving the mature 70S translation initiation complex.</text>
</comment>
<comment type="subunit">
    <text evidence="1">Component of the 30S ribosomal translation pre-initiation complex which assembles on the 30S ribosome in the order IF-2 and IF-3, IF-1 and N-formylmethionyl-tRNA(fMet); mRNA recruitment can occur at any time during PIC assembly.</text>
</comment>
<comment type="subcellular location">
    <subcellularLocation>
        <location evidence="1">Cytoplasm</location>
    </subcellularLocation>
</comment>
<comment type="similarity">
    <text evidence="1">Belongs to the IF-1 family.</text>
</comment>
<sequence length="72" mass="8220">MPKDDSIEVEGTVMEPLPNAMFRVVLDNGHKVLAHISGKMRMHFIRILPGDKVKVELSPYDLTRGRITYRAK</sequence>
<feature type="chain" id="PRO_0000263826" description="Translation initiation factor IF-1">
    <location>
        <begin position="1"/>
        <end position="72"/>
    </location>
</feature>
<feature type="domain" description="S1-like" evidence="1">
    <location>
        <begin position="1"/>
        <end position="72"/>
    </location>
</feature>
<reference key="1">
    <citation type="journal article" date="2006" name="Proc. Natl. Acad. Sci. U.S.A.">
        <title>Evolution of sensory complexity recorded in a myxobacterial genome.</title>
        <authorList>
            <person name="Goldman B.S."/>
            <person name="Nierman W.C."/>
            <person name="Kaiser D."/>
            <person name="Slater S.C."/>
            <person name="Durkin A.S."/>
            <person name="Eisen J.A."/>
            <person name="Ronning C.M."/>
            <person name="Barbazuk W.B."/>
            <person name="Blanchard M."/>
            <person name="Field C."/>
            <person name="Halling C."/>
            <person name="Hinkle G."/>
            <person name="Iartchuk O."/>
            <person name="Kim H.S."/>
            <person name="Mackenzie C."/>
            <person name="Madupu R."/>
            <person name="Miller N."/>
            <person name="Shvartsbeyn A."/>
            <person name="Sullivan S.A."/>
            <person name="Vaudin M."/>
            <person name="Wiegand R."/>
            <person name="Kaplan H.B."/>
        </authorList>
    </citation>
    <scope>NUCLEOTIDE SEQUENCE [LARGE SCALE GENOMIC DNA]</scope>
    <source>
        <strain>DK1622</strain>
    </source>
</reference>
<dbReference type="EMBL" id="CP000113">
    <property type="protein sequence ID" value="ABF91833.1"/>
    <property type="molecule type" value="Genomic_DNA"/>
</dbReference>
<dbReference type="RefSeq" id="WP_002614803.1">
    <property type="nucleotide sequence ID" value="NC_008095.1"/>
</dbReference>
<dbReference type="SMR" id="Q1D753"/>
<dbReference type="STRING" id="246197.MXAN_3321"/>
<dbReference type="EnsemblBacteria" id="ABF91833">
    <property type="protein sequence ID" value="ABF91833"/>
    <property type="gene ID" value="MXAN_3321"/>
</dbReference>
<dbReference type="GeneID" id="64082922"/>
<dbReference type="KEGG" id="mxa:MXAN_3321"/>
<dbReference type="eggNOG" id="COG0361">
    <property type="taxonomic scope" value="Bacteria"/>
</dbReference>
<dbReference type="HOGENOM" id="CLU_151267_1_0_7"/>
<dbReference type="OrthoDB" id="9803250at2"/>
<dbReference type="Proteomes" id="UP000002402">
    <property type="component" value="Chromosome"/>
</dbReference>
<dbReference type="GO" id="GO:0005829">
    <property type="term" value="C:cytosol"/>
    <property type="evidence" value="ECO:0007669"/>
    <property type="project" value="TreeGrafter"/>
</dbReference>
<dbReference type="GO" id="GO:0043022">
    <property type="term" value="F:ribosome binding"/>
    <property type="evidence" value="ECO:0007669"/>
    <property type="project" value="UniProtKB-UniRule"/>
</dbReference>
<dbReference type="GO" id="GO:0019843">
    <property type="term" value="F:rRNA binding"/>
    <property type="evidence" value="ECO:0007669"/>
    <property type="project" value="UniProtKB-UniRule"/>
</dbReference>
<dbReference type="GO" id="GO:0003743">
    <property type="term" value="F:translation initiation factor activity"/>
    <property type="evidence" value="ECO:0007669"/>
    <property type="project" value="UniProtKB-UniRule"/>
</dbReference>
<dbReference type="CDD" id="cd04451">
    <property type="entry name" value="S1_IF1"/>
    <property type="match status" value="1"/>
</dbReference>
<dbReference type="FunFam" id="2.40.50.140:FF:000002">
    <property type="entry name" value="Translation initiation factor IF-1"/>
    <property type="match status" value="1"/>
</dbReference>
<dbReference type="Gene3D" id="2.40.50.140">
    <property type="entry name" value="Nucleic acid-binding proteins"/>
    <property type="match status" value="1"/>
</dbReference>
<dbReference type="HAMAP" id="MF_00075">
    <property type="entry name" value="IF_1"/>
    <property type="match status" value="1"/>
</dbReference>
<dbReference type="InterPro" id="IPR012340">
    <property type="entry name" value="NA-bd_OB-fold"/>
</dbReference>
<dbReference type="InterPro" id="IPR006196">
    <property type="entry name" value="RNA-binding_domain_S1_IF1"/>
</dbReference>
<dbReference type="InterPro" id="IPR003029">
    <property type="entry name" value="S1_domain"/>
</dbReference>
<dbReference type="InterPro" id="IPR004368">
    <property type="entry name" value="TIF_IF1"/>
</dbReference>
<dbReference type="NCBIfam" id="TIGR00008">
    <property type="entry name" value="infA"/>
    <property type="match status" value="1"/>
</dbReference>
<dbReference type="PANTHER" id="PTHR33370">
    <property type="entry name" value="TRANSLATION INITIATION FACTOR IF-1, CHLOROPLASTIC"/>
    <property type="match status" value="1"/>
</dbReference>
<dbReference type="PANTHER" id="PTHR33370:SF1">
    <property type="entry name" value="TRANSLATION INITIATION FACTOR IF-1, CHLOROPLASTIC"/>
    <property type="match status" value="1"/>
</dbReference>
<dbReference type="Pfam" id="PF01176">
    <property type="entry name" value="eIF-1a"/>
    <property type="match status" value="1"/>
</dbReference>
<dbReference type="SMART" id="SM00316">
    <property type="entry name" value="S1"/>
    <property type="match status" value="1"/>
</dbReference>
<dbReference type="SUPFAM" id="SSF50249">
    <property type="entry name" value="Nucleic acid-binding proteins"/>
    <property type="match status" value="1"/>
</dbReference>
<dbReference type="PROSITE" id="PS50832">
    <property type="entry name" value="S1_IF1_TYPE"/>
    <property type="match status" value="1"/>
</dbReference>
<name>IF1_MYXXD</name>
<gene>
    <name evidence="1" type="primary">infA</name>
    <name type="ordered locus">MXAN_3321</name>
</gene>
<organism>
    <name type="scientific">Myxococcus xanthus (strain DK1622)</name>
    <dbReference type="NCBI Taxonomy" id="246197"/>
    <lineage>
        <taxon>Bacteria</taxon>
        <taxon>Pseudomonadati</taxon>
        <taxon>Myxococcota</taxon>
        <taxon>Myxococcia</taxon>
        <taxon>Myxococcales</taxon>
        <taxon>Cystobacterineae</taxon>
        <taxon>Myxococcaceae</taxon>
        <taxon>Myxococcus</taxon>
    </lineage>
</organism>
<evidence type="ECO:0000255" key="1">
    <source>
        <dbReference type="HAMAP-Rule" id="MF_00075"/>
    </source>
</evidence>
<proteinExistence type="inferred from homology"/>